<sequence>MGERTWPQLLAALLRGDELSTADTAWAMGEIMSGSAGSAQIAGFAIALRAKGETPAEVSGLVEAMLQHAVRVELPEDLRATAVDVVGTGGDLAHTVNISTMASLVVAGAGVRVVKHGNRAASSSCGTADVLEFLGLPLDLGPEGVAACVAEAGIGFCFAARFHPGMRHAGPVRRELGVPTAFNFLGPLTNPARPRAGAVGCFDARMAPVMAAVFAARGDSTLVLRGEDGLDEFTTAAPTRVWAAQNGTVREALLDAADLGVPRATLADLRGGDVACNADAVRRLLAGETGPIRDAVLVNAAAALATQAPLDGDLTEALRTGLSRAAESIDSGAAARTLNRWIEVAHAVRPVLG</sequence>
<reference key="1">
    <citation type="submission" date="2007-10" db="EMBL/GenBank/DDBJ databases">
        <title>Complete sequence of Salinispora arenicola CNS-205.</title>
        <authorList>
            <consortium name="US DOE Joint Genome Institute"/>
            <person name="Copeland A."/>
            <person name="Lucas S."/>
            <person name="Lapidus A."/>
            <person name="Barry K."/>
            <person name="Glavina del Rio T."/>
            <person name="Dalin E."/>
            <person name="Tice H."/>
            <person name="Pitluck S."/>
            <person name="Foster B."/>
            <person name="Schmutz J."/>
            <person name="Larimer F."/>
            <person name="Land M."/>
            <person name="Hauser L."/>
            <person name="Kyrpides N."/>
            <person name="Ivanova N."/>
            <person name="Jensen P.R."/>
            <person name="Moore B.S."/>
            <person name="Penn K."/>
            <person name="Jenkins C."/>
            <person name="Udwary D."/>
            <person name="Xiang L."/>
            <person name="Gontang E."/>
            <person name="Richardson P."/>
        </authorList>
    </citation>
    <scope>NUCLEOTIDE SEQUENCE [LARGE SCALE GENOMIC DNA]</scope>
    <source>
        <strain>CNS-205</strain>
    </source>
</reference>
<comment type="function">
    <text evidence="1">Catalyzes the transfer of the phosphoribosyl group of 5-phosphorylribose-1-pyrophosphate (PRPP) to anthranilate to yield N-(5'-phosphoribosyl)-anthranilate (PRA).</text>
</comment>
<comment type="catalytic activity">
    <reaction evidence="1">
        <text>N-(5-phospho-beta-D-ribosyl)anthranilate + diphosphate = 5-phospho-alpha-D-ribose 1-diphosphate + anthranilate</text>
        <dbReference type="Rhea" id="RHEA:11768"/>
        <dbReference type="ChEBI" id="CHEBI:16567"/>
        <dbReference type="ChEBI" id="CHEBI:18277"/>
        <dbReference type="ChEBI" id="CHEBI:33019"/>
        <dbReference type="ChEBI" id="CHEBI:58017"/>
        <dbReference type="EC" id="2.4.2.18"/>
    </reaction>
</comment>
<comment type="cofactor">
    <cofactor evidence="1">
        <name>Mg(2+)</name>
        <dbReference type="ChEBI" id="CHEBI:18420"/>
    </cofactor>
    <text evidence="1">Binds 2 magnesium ions per monomer.</text>
</comment>
<comment type="pathway">
    <text evidence="1">Amino-acid biosynthesis; L-tryptophan biosynthesis; L-tryptophan from chorismate: step 2/5.</text>
</comment>
<comment type="subunit">
    <text evidence="1">Homodimer.</text>
</comment>
<comment type="similarity">
    <text evidence="1">Belongs to the anthranilate phosphoribosyltransferase family.</text>
</comment>
<feature type="chain" id="PRO_1000078025" description="Anthranilate phosphoribosyltransferase">
    <location>
        <begin position="1"/>
        <end position="353"/>
    </location>
</feature>
<feature type="binding site" evidence="1">
    <location>
        <position position="87"/>
    </location>
    <ligand>
        <name>5-phospho-alpha-D-ribose 1-diphosphate</name>
        <dbReference type="ChEBI" id="CHEBI:58017"/>
    </ligand>
</feature>
<feature type="binding site" evidence="1">
    <location>
        <position position="87"/>
    </location>
    <ligand>
        <name>anthranilate</name>
        <dbReference type="ChEBI" id="CHEBI:16567"/>
        <label>1</label>
    </ligand>
</feature>
<feature type="binding site" evidence="1">
    <location>
        <begin position="90"/>
        <end position="91"/>
    </location>
    <ligand>
        <name>5-phospho-alpha-D-ribose 1-diphosphate</name>
        <dbReference type="ChEBI" id="CHEBI:58017"/>
    </ligand>
</feature>
<feature type="binding site" evidence="1">
    <location>
        <position position="95"/>
    </location>
    <ligand>
        <name>5-phospho-alpha-D-ribose 1-diphosphate</name>
        <dbReference type="ChEBI" id="CHEBI:58017"/>
    </ligand>
</feature>
<feature type="binding site" evidence="1">
    <location>
        <begin position="97"/>
        <end position="100"/>
    </location>
    <ligand>
        <name>5-phospho-alpha-D-ribose 1-diphosphate</name>
        <dbReference type="ChEBI" id="CHEBI:58017"/>
    </ligand>
</feature>
<feature type="binding site" evidence="1">
    <location>
        <position position="99"/>
    </location>
    <ligand>
        <name>Mg(2+)</name>
        <dbReference type="ChEBI" id="CHEBI:18420"/>
        <label>1</label>
    </ligand>
</feature>
<feature type="binding site" evidence="1">
    <location>
        <begin position="115"/>
        <end position="123"/>
    </location>
    <ligand>
        <name>5-phospho-alpha-D-ribose 1-diphosphate</name>
        <dbReference type="ChEBI" id="CHEBI:58017"/>
    </ligand>
</feature>
<feature type="binding site" evidence="1">
    <location>
        <position position="118"/>
    </location>
    <ligand>
        <name>anthranilate</name>
        <dbReference type="ChEBI" id="CHEBI:16567"/>
        <label>1</label>
    </ligand>
</feature>
<feature type="binding site" evidence="1">
    <location>
        <position position="127"/>
    </location>
    <ligand>
        <name>5-phospho-alpha-D-ribose 1-diphosphate</name>
        <dbReference type="ChEBI" id="CHEBI:58017"/>
    </ligand>
</feature>
<feature type="binding site" evidence="1">
    <location>
        <position position="173"/>
    </location>
    <ligand>
        <name>anthranilate</name>
        <dbReference type="ChEBI" id="CHEBI:16567"/>
        <label>2</label>
    </ligand>
</feature>
<feature type="binding site" evidence="1">
    <location>
        <position position="231"/>
    </location>
    <ligand>
        <name>Mg(2+)</name>
        <dbReference type="ChEBI" id="CHEBI:18420"/>
        <label>2</label>
    </ligand>
</feature>
<feature type="binding site" evidence="1">
    <location>
        <position position="232"/>
    </location>
    <ligand>
        <name>Mg(2+)</name>
        <dbReference type="ChEBI" id="CHEBI:18420"/>
        <label>1</label>
    </ligand>
</feature>
<feature type="binding site" evidence="1">
    <location>
        <position position="232"/>
    </location>
    <ligand>
        <name>Mg(2+)</name>
        <dbReference type="ChEBI" id="CHEBI:18420"/>
        <label>2</label>
    </ligand>
</feature>
<evidence type="ECO:0000255" key="1">
    <source>
        <dbReference type="HAMAP-Rule" id="MF_00211"/>
    </source>
</evidence>
<accession>A8LYC4</accession>
<keyword id="KW-0028">Amino-acid biosynthesis</keyword>
<keyword id="KW-0057">Aromatic amino acid biosynthesis</keyword>
<keyword id="KW-0328">Glycosyltransferase</keyword>
<keyword id="KW-0460">Magnesium</keyword>
<keyword id="KW-0479">Metal-binding</keyword>
<keyword id="KW-0808">Transferase</keyword>
<keyword id="KW-0822">Tryptophan biosynthesis</keyword>
<gene>
    <name evidence="1" type="primary">trpD</name>
    <name type="ordered locus">Sare_3530</name>
</gene>
<protein>
    <recommendedName>
        <fullName evidence="1">Anthranilate phosphoribosyltransferase</fullName>
        <ecNumber evidence="1">2.4.2.18</ecNumber>
    </recommendedName>
</protein>
<proteinExistence type="inferred from homology"/>
<name>TRPD_SALAI</name>
<dbReference type="EC" id="2.4.2.18" evidence="1"/>
<dbReference type="EMBL" id="CP000850">
    <property type="protein sequence ID" value="ABV99332.1"/>
    <property type="molecule type" value="Genomic_DNA"/>
</dbReference>
<dbReference type="SMR" id="A8LYC4"/>
<dbReference type="STRING" id="391037.Sare_3530"/>
<dbReference type="KEGG" id="saq:Sare_3530"/>
<dbReference type="PATRIC" id="fig|391037.6.peg.3556"/>
<dbReference type="eggNOG" id="COG0547">
    <property type="taxonomic scope" value="Bacteria"/>
</dbReference>
<dbReference type="HOGENOM" id="CLU_034315_4_1_11"/>
<dbReference type="OrthoDB" id="9806430at2"/>
<dbReference type="UniPathway" id="UPA00035">
    <property type="reaction ID" value="UER00041"/>
</dbReference>
<dbReference type="GO" id="GO:0005829">
    <property type="term" value="C:cytosol"/>
    <property type="evidence" value="ECO:0007669"/>
    <property type="project" value="TreeGrafter"/>
</dbReference>
<dbReference type="GO" id="GO:0004048">
    <property type="term" value="F:anthranilate phosphoribosyltransferase activity"/>
    <property type="evidence" value="ECO:0007669"/>
    <property type="project" value="UniProtKB-UniRule"/>
</dbReference>
<dbReference type="GO" id="GO:0000287">
    <property type="term" value="F:magnesium ion binding"/>
    <property type="evidence" value="ECO:0007669"/>
    <property type="project" value="UniProtKB-UniRule"/>
</dbReference>
<dbReference type="GO" id="GO:0000162">
    <property type="term" value="P:L-tryptophan biosynthetic process"/>
    <property type="evidence" value="ECO:0007669"/>
    <property type="project" value="UniProtKB-UniRule"/>
</dbReference>
<dbReference type="FunFam" id="3.40.1030.10:FF:000002">
    <property type="entry name" value="Anthranilate phosphoribosyltransferase"/>
    <property type="match status" value="1"/>
</dbReference>
<dbReference type="Gene3D" id="3.40.1030.10">
    <property type="entry name" value="Nucleoside phosphorylase/phosphoribosyltransferase catalytic domain"/>
    <property type="match status" value="1"/>
</dbReference>
<dbReference type="Gene3D" id="1.20.970.10">
    <property type="entry name" value="Transferase, Pyrimidine Nucleoside Phosphorylase, Chain C"/>
    <property type="match status" value="1"/>
</dbReference>
<dbReference type="HAMAP" id="MF_00211">
    <property type="entry name" value="TrpD"/>
    <property type="match status" value="1"/>
</dbReference>
<dbReference type="InterPro" id="IPR005940">
    <property type="entry name" value="Anthranilate_Pribosyl_Tfrase"/>
</dbReference>
<dbReference type="InterPro" id="IPR000312">
    <property type="entry name" value="Glycosyl_Trfase_fam3"/>
</dbReference>
<dbReference type="InterPro" id="IPR017459">
    <property type="entry name" value="Glycosyl_Trfase_fam3_N_dom"/>
</dbReference>
<dbReference type="InterPro" id="IPR036320">
    <property type="entry name" value="Glycosyl_Trfase_fam3_N_dom_sf"/>
</dbReference>
<dbReference type="InterPro" id="IPR035902">
    <property type="entry name" value="Nuc_phospho_transferase"/>
</dbReference>
<dbReference type="NCBIfam" id="TIGR01245">
    <property type="entry name" value="trpD"/>
    <property type="match status" value="1"/>
</dbReference>
<dbReference type="PANTHER" id="PTHR43285">
    <property type="entry name" value="ANTHRANILATE PHOSPHORIBOSYLTRANSFERASE"/>
    <property type="match status" value="1"/>
</dbReference>
<dbReference type="PANTHER" id="PTHR43285:SF2">
    <property type="entry name" value="ANTHRANILATE PHOSPHORIBOSYLTRANSFERASE"/>
    <property type="match status" value="1"/>
</dbReference>
<dbReference type="Pfam" id="PF02885">
    <property type="entry name" value="Glycos_trans_3N"/>
    <property type="match status" value="1"/>
</dbReference>
<dbReference type="Pfam" id="PF00591">
    <property type="entry name" value="Glycos_transf_3"/>
    <property type="match status" value="1"/>
</dbReference>
<dbReference type="SUPFAM" id="SSF52418">
    <property type="entry name" value="Nucleoside phosphorylase/phosphoribosyltransferase catalytic domain"/>
    <property type="match status" value="1"/>
</dbReference>
<dbReference type="SUPFAM" id="SSF47648">
    <property type="entry name" value="Nucleoside phosphorylase/phosphoribosyltransferase N-terminal domain"/>
    <property type="match status" value="1"/>
</dbReference>
<organism>
    <name type="scientific">Salinispora arenicola (strain CNS-205)</name>
    <dbReference type="NCBI Taxonomy" id="391037"/>
    <lineage>
        <taxon>Bacteria</taxon>
        <taxon>Bacillati</taxon>
        <taxon>Actinomycetota</taxon>
        <taxon>Actinomycetes</taxon>
        <taxon>Micromonosporales</taxon>
        <taxon>Micromonosporaceae</taxon>
        <taxon>Salinispora</taxon>
    </lineage>
</organism>